<dbReference type="EMBL" id="AJ517411">
    <property type="protein sequence ID" value="CAD56944.1"/>
    <property type="molecule type" value="mRNA"/>
</dbReference>
<dbReference type="RefSeq" id="NP_001011578.1">
    <property type="nucleotide sequence ID" value="NM_001011578.1"/>
</dbReference>
<dbReference type="PDB" id="2LIC">
    <property type="method" value="NMR"/>
    <property type="chains" value="A=358-392"/>
</dbReference>
<dbReference type="PDBsum" id="2LIC"/>
<dbReference type="SMR" id="Q868N5"/>
<dbReference type="STRING" id="7460.Q868N5"/>
<dbReference type="Allergome" id="10030">
    <property type="allergen name" value="Api m 12"/>
</dbReference>
<dbReference type="Allergome" id="10031">
    <property type="allergen name" value="Api m 12.0101"/>
</dbReference>
<dbReference type="GlyCosmos" id="Q868N5">
    <property type="glycosylation" value="2 sites, No reported glycans"/>
</dbReference>
<dbReference type="PaxDb" id="7460-GB49544-PA"/>
<dbReference type="EnsemblMetazoa" id="NM_001011578">
    <property type="protein sequence ID" value="NP_001011578"/>
    <property type="gene ID" value="GeneID_406088"/>
</dbReference>
<dbReference type="GeneID" id="406088"/>
<dbReference type="KEGG" id="ame:406088"/>
<dbReference type="CTD" id="36421"/>
<dbReference type="eggNOG" id="KOG4338">
    <property type="taxonomic scope" value="Eukaryota"/>
</dbReference>
<dbReference type="InParanoid" id="Q868N5"/>
<dbReference type="OrthoDB" id="160294at2759"/>
<dbReference type="PhylomeDB" id="Q868N5"/>
<dbReference type="EvolutionaryTrace" id="Q868N5"/>
<dbReference type="Proteomes" id="UP000005203">
    <property type="component" value="Linkage group LG4"/>
</dbReference>
<dbReference type="GO" id="GO:0005576">
    <property type="term" value="C:extracellular region"/>
    <property type="evidence" value="ECO:0007669"/>
    <property type="project" value="UniProtKB-SubCell"/>
</dbReference>
<dbReference type="GO" id="GO:0005319">
    <property type="term" value="F:lipid transporter activity"/>
    <property type="evidence" value="ECO:0007669"/>
    <property type="project" value="InterPro"/>
</dbReference>
<dbReference type="GO" id="GO:0045735">
    <property type="term" value="F:nutrient reservoir activity"/>
    <property type="evidence" value="ECO:0007669"/>
    <property type="project" value="UniProtKB-KW"/>
</dbReference>
<dbReference type="DisProt" id="DP01582"/>
<dbReference type="FunFam" id="1.25.10.20:FF:000003">
    <property type="entry name" value="Vitellogenin C"/>
    <property type="match status" value="1"/>
</dbReference>
<dbReference type="Gene3D" id="2.30.230.10">
    <property type="entry name" value="Lipovitellin, beta-sheet shell regions, chain A"/>
    <property type="match status" value="1"/>
</dbReference>
<dbReference type="Gene3D" id="2.20.80.10">
    <property type="entry name" value="Lipovitellin-phosvitin complex, chain A, domain 4"/>
    <property type="match status" value="1"/>
</dbReference>
<dbReference type="Gene3D" id="1.25.10.20">
    <property type="entry name" value="Vitellinogen, superhelical"/>
    <property type="match status" value="1"/>
</dbReference>
<dbReference type="InterPro" id="IPR015819">
    <property type="entry name" value="Lipid_transp_b-sht_shell"/>
</dbReference>
<dbReference type="InterPro" id="IPR011030">
    <property type="entry name" value="Lipovitellin_superhlx_dom"/>
</dbReference>
<dbReference type="InterPro" id="IPR015816">
    <property type="entry name" value="Vitellinogen_b-sht_N"/>
</dbReference>
<dbReference type="InterPro" id="IPR015255">
    <property type="entry name" value="Vitellinogen_open_b-sht"/>
</dbReference>
<dbReference type="InterPro" id="IPR050733">
    <property type="entry name" value="Vitellogenin/Apolipophorin"/>
</dbReference>
<dbReference type="InterPro" id="IPR001747">
    <property type="entry name" value="Vitellogenin_N"/>
</dbReference>
<dbReference type="InterPro" id="IPR001846">
    <property type="entry name" value="VWF_type-D"/>
</dbReference>
<dbReference type="PANTHER" id="PTHR23345:SF15">
    <property type="entry name" value="VITELLOGENIN 1-RELATED"/>
    <property type="match status" value="1"/>
</dbReference>
<dbReference type="PANTHER" id="PTHR23345">
    <property type="entry name" value="VITELLOGENIN-RELATED"/>
    <property type="match status" value="1"/>
</dbReference>
<dbReference type="Pfam" id="PF09172">
    <property type="entry name" value="Vit_open_b-sht"/>
    <property type="match status" value="1"/>
</dbReference>
<dbReference type="Pfam" id="PF01347">
    <property type="entry name" value="Vitellogenin_N"/>
    <property type="match status" value="1"/>
</dbReference>
<dbReference type="Pfam" id="PF00094">
    <property type="entry name" value="VWD"/>
    <property type="match status" value="1"/>
</dbReference>
<dbReference type="SMART" id="SM01169">
    <property type="entry name" value="DUF1943"/>
    <property type="match status" value="1"/>
</dbReference>
<dbReference type="SMART" id="SM00638">
    <property type="entry name" value="LPD_N"/>
    <property type="match status" value="1"/>
</dbReference>
<dbReference type="SMART" id="SM00216">
    <property type="entry name" value="VWD"/>
    <property type="match status" value="1"/>
</dbReference>
<dbReference type="SUPFAM" id="SSF56968">
    <property type="entry name" value="Lipovitellin-phosvitin complex, beta-sheet shell regions"/>
    <property type="match status" value="2"/>
</dbReference>
<dbReference type="SUPFAM" id="SSF48431">
    <property type="entry name" value="Lipovitellin-phosvitin complex, superhelical domain"/>
    <property type="match status" value="1"/>
</dbReference>
<dbReference type="PROSITE" id="PS51211">
    <property type="entry name" value="VITELLOGENIN"/>
    <property type="match status" value="1"/>
</dbReference>
<dbReference type="PROSITE" id="PS51233">
    <property type="entry name" value="VWFD"/>
    <property type="match status" value="1"/>
</dbReference>
<keyword id="KW-0002">3D-structure</keyword>
<keyword id="KW-1015">Disulfide bond</keyword>
<keyword id="KW-0325">Glycoprotein</keyword>
<keyword id="KW-1185">Reference proteome</keyword>
<keyword id="KW-0964">Secreted</keyword>
<keyword id="KW-0732">Signal</keyword>
<keyword id="KW-0758">Storage protein</keyword>
<proteinExistence type="evidence at protein level"/>
<reference key="1">
    <citation type="journal article" date="2003" name="Insect Biochem. Mol. Biol.">
        <title>The vitellogenin of the honey bee, Apis mellifera: structural analysis of the cDNA and expression studies.</title>
        <authorList>
            <person name="Piulachs M.D."/>
            <person name="Guidugli K.R."/>
            <person name="Barchuk A.R."/>
            <person name="Cruz J."/>
            <person name="Simoes Z.L.P."/>
            <person name="Belles X."/>
        </authorList>
    </citation>
    <scope>NUCLEOTIDE SEQUENCE [MRNA]</scope>
    <scope>TISSUE SPECIFICITY</scope>
    <scope>DEVELOPMENTAL STAGE</scope>
    <source>
        <tissue>Fat body</tissue>
    </source>
</reference>
<reference key="2">
    <citation type="journal article" date="2011" name="Nature">
        <title>Royalactin induces queen differentiation in honeybees.</title>
        <authorList>
            <person name="Kamakura M."/>
        </authorList>
    </citation>
    <scope>FUNCTION</scope>
    <scope>INDUCTION BY MRJP1</scope>
</reference>
<comment type="function">
    <text evidence="1 7">Precursor of the egg-yolk proteins that are sources of nutrients during embryonic development (By similarity). Involved in the differentiation of honeybee larvae into queens.</text>
</comment>
<comment type="subcellular location">
    <subcellularLocation>
        <location>Secreted</location>
    </subcellularLocation>
</comment>
<comment type="tissue specificity">
    <text evidence="6">Accumulates in the hemolymph. Represents up to 70% of the queen's hemolymph proteins. During the first week of the worker adult life, when it becomes a nurse bee and performs brood-rearing tasks, the vitellogenin titer increases and may account for up to 40% of the total hemolymph proteins.</text>
</comment>
<comment type="developmental stage">
    <text evidence="6">In queens, first expressed in mid-late pupal stage and a high production is maintained throughout adult life. In workers, observed in late pupal stage and expressed at low levels in adults. Levels can increase in some young workers if an egg-laying queen is missing to the colony. Also detected in drones, but in freshly molted adults and not in pupae.</text>
</comment>
<comment type="induction">
    <text evidence="7">By MRJP1 during the differentiation of honeybee larvae into queens.</text>
</comment>
<feature type="signal peptide" evidence="2">
    <location>
        <begin position="1"/>
        <end position="16"/>
    </location>
</feature>
<feature type="chain" id="PRO_5000070065" description="Vitellogenin">
    <location>
        <begin position="17"/>
        <end position="1770"/>
    </location>
</feature>
<feature type="domain" description="Vitellogenin" evidence="3">
    <location>
        <begin position="22"/>
        <end position="809"/>
    </location>
</feature>
<feature type="domain" description="VWFD" evidence="4">
    <location>
        <begin position="1442"/>
        <end position="1635"/>
    </location>
</feature>
<feature type="region of interest" description="Disordered" evidence="5">
    <location>
        <begin position="373"/>
        <end position="394"/>
    </location>
</feature>
<feature type="glycosylation site" description="N-linked (GlcNAc...) asparagine" evidence="2">
    <location>
        <position position="296"/>
    </location>
</feature>
<feature type="glycosylation site" description="N-linked (GlcNAc...) asparagine" evidence="2">
    <location>
        <position position="1067"/>
    </location>
</feature>
<feature type="disulfide bond" evidence="3 4">
    <location>
        <begin position="178"/>
        <end position="222"/>
    </location>
</feature>
<feature type="disulfide bond" evidence="4">
    <location>
        <begin position="1444"/>
        <end position="1598"/>
    </location>
</feature>
<feature type="disulfide bond" evidence="4">
    <location>
        <begin position="1466"/>
        <end position="1634"/>
    </location>
</feature>
<feature type="strand" evidence="8">
    <location>
        <begin position="364"/>
        <end position="366"/>
    </location>
</feature>
<feature type="strand" evidence="8">
    <location>
        <begin position="368"/>
        <end position="371"/>
    </location>
</feature>
<evidence type="ECO:0000250" key="1"/>
<evidence type="ECO:0000255" key="2"/>
<evidence type="ECO:0000255" key="3">
    <source>
        <dbReference type="PROSITE-ProRule" id="PRU00557"/>
    </source>
</evidence>
<evidence type="ECO:0000255" key="4">
    <source>
        <dbReference type="PROSITE-ProRule" id="PRU00580"/>
    </source>
</evidence>
<evidence type="ECO:0000256" key="5">
    <source>
        <dbReference type="SAM" id="MobiDB-lite"/>
    </source>
</evidence>
<evidence type="ECO:0000269" key="6">
    <source>
    </source>
</evidence>
<evidence type="ECO:0000269" key="7">
    <source>
    </source>
</evidence>
<evidence type="ECO:0007829" key="8">
    <source>
        <dbReference type="PDB" id="2LIC"/>
    </source>
</evidence>
<sequence length="1770" mass="201048">MLLLLTLLLFAGTVAADFQHNWQVGNEYTYLVRSRTLTSLGDLSDVHTGILIKALLTVQAKDSNVLAAKVWNGQYARVQQSMPDGWETEISDQMLELRDLPISGKPFQIRMKHGLIRDLIVDRDVPTWEVNILKSIVGQLQVDTQGENAVKVNSVQVPTDDEPYASFKAMEDSVGGKCEVLYDIAPLSDFVIHRSPELVPMPTLKGDGRHMEVIKIKNFDNCDQRINYHFGMTDNSRLEPGTNKNGKFFSRSSTSRIVISESLKHFTIQSSVTTSKMMVSPRLYDRQNGLVLSRMNLTLAKMEKTSKPLPMVDNPESTGNLVYIYNNPFSDVEERRVSKTAMNSNQIVSDNSLSSSEEKLKQDILNLRTDISSSSSSISSSEENDFWQPKPTLEDAPQNSLLPNFVGYKGKHIGKSGKVDVINAAKELIFQIANELEDASNIPVHATLEKFMILCNLMRTMNRKQISELESNMQISPNELKPNDKSQVIKQNTWTVFRDAITQTGTGPAFLTIKEWIERGTTKSMEAANIMSKLPKTVRTPTDSYIRSFFELLQNPKVSNEQFLNTAATLSFCEMIHNAQVNKRSIHNNYPVHTFGRLTSKHDNSLYDEYIPFLERELRKAHQEKDSPRIQTYIMALGMIGEPKILSVFEPYLEGKQQMTVFQRTLMVGSLGKLTETNPKLARSVLYKIYLNTMESHEVRCTAVFLLMKTNPPLSMLQRMAEFTKLDTNRQVNSAVKSTIQSLMKLKSPEWKDLAKKARSVNHLLTHHEYDYELSRGYIDEKILENQNIITHMILNYVGSEDSVIPRILYLTWYSSNGDIKVPSTKVLAMISSVKSFMELSLRSVKDRETIISAAEKIAEELKIVPEELVPLEGNLMINNKYALKFFPFDKHILDKLPTLISNYIEAVKEGKFMNVNMLDTYESVHSFPTETGLPFVYTFNVIKLTKTSGTVQAQINPDFAFIVNSNLRLTFSKNVQGRVGFVTPFEHRHFISGIDSNLHVYAPLKISLDVNTPKGNMQWKIWPMKGEEKSRLFHYSVVPFVSNHDILNLRPLSMEKGTRPMIPDDNTSLALPKNEGPFRLNVETAKTNEEMWELIDTEKLTDRLPYPWTMDNERYVKVDMYMNLEGEQKDPVIFSTSFDSKVMTRPDTDSENWTPKMMAVEPTDKQANSKTRRQEMMREAGRGIESAKSYVVDVRVHVPGESESETVLTLAWSESNVESKGRLLGFWRVEMPRSNADYEVCIGSQIMVSPETLLSYDEKMDQKPKMDFNVDIRYGKNCGKGERIDMNGKLRQSPRLKELVGATSIIKDCVEDMKRGNKILRTCQKAVVLSMLLDEVDISMEVPSDALIALYSQGLFSLSEIDNLDVSLDVSNPKNAGKKKIDVRAKLNEYLDKADVIVNTPIMDAHFKDVKLSDFGFSTEDILDTADEDLLINNVFYEDETSCMLDKTRAQTFDGKDYPLRLGPCWHAVMTTYPRINPDNHNEKLHIPKDKSVSVLSRENEAGQKEVKVLLGSDKIKFVPGTTSQPEVFVNGEKIVVSRNKAYQKVEENEIIFEIYKMGDRFIGLTSDKFDVSLALDGERVMLKASEDYRYSVRGLCGNFDHDSTNDFVGPKNCLFRKPEHFVASYALISNQCEGDSLNVAKSLQDHDCIRQERTQQRNVISDSESGRLDTEMSTWGYHHNVNKHCTIHRTQVKETDDKICFTMRPVVSCASGCTAVETKSKPYKFHCMEKNEAAMKLKKRIEKGANPDLSQKPVSTTEELTVPFVCKA</sequence>
<gene>
    <name type="primary">Vg</name>
</gene>
<protein>
    <recommendedName>
        <fullName>Vitellogenin</fullName>
    </recommendedName>
</protein>
<accession>Q868N5</accession>
<organism>
    <name type="scientific">Apis mellifera</name>
    <name type="common">Honeybee</name>
    <dbReference type="NCBI Taxonomy" id="7460"/>
    <lineage>
        <taxon>Eukaryota</taxon>
        <taxon>Metazoa</taxon>
        <taxon>Ecdysozoa</taxon>
        <taxon>Arthropoda</taxon>
        <taxon>Hexapoda</taxon>
        <taxon>Insecta</taxon>
        <taxon>Pterygota</taxon>
        <taxon>Neoptera</taxon>
        <taxon>Endopterygota</taxon>
        <taxon>Hymenoptera</taxon>
        <taxon>Apocrita</taxon>
        <taxon>Aculeata</taxon>
        <taxon>Apoidea</taxon>
        <taxon>Anthophila</taxon>
        <taxon>Apidae</taxon>
        <taxon>Apis</taxon>
    </lineage>
</organism>
<name>VIT_APIME</name>